<accession>Q5PDU6</accession>
<comment type="function">
    <text evidence="1">Part of the energy-coupling factor (ECF) transporter complex CbiMNOQ involved in cobalt import.</text>
</comment>
<comment type="pathway">
    <text evidence="1">Cofactor biosynthesis; adenosylcobalamin biosynthesis.</text>
</comment>
<comment type="subunit">
    <text evidence="1">Forms an energy-coupling factor (ECF) transporter complex composed of an ATP-binding protein (A component, CbiO), a transmembrane protein (T component, CbiQ) and 2 possible substrate-capture proteins (S components, CbiM and CbiN) of unknown stoichimetry.</text>
</comment>
<comment type="subcellular location">
    <subcellularLocation>
        <location evidence="1">Cell inner membrane</location>
        <topology evidence="1">Multi-pass membrane protein</topology>
    </subcellularLocation>
</comment>
<comment type="similarity">
    <text evidence="1">Belongs to the CbiN family.</text>
</comment>
<keyword id="KW-0997">Cell inner membrane</keyword>
<keyword id="KW-1003">Cell membrane</keyword>
<keyword id="KW-0169">Cobalamin biosynthesis</keyword>
<keyword id="KW-0170">Cobalt</keyword>
<keyword id="KW-0171">Cobalt transport</keyword>
<keyword id="KW-0406">Ion transport</keyword>
<keyword id="KW-0472">Membrane</keyword>
<keyword id="KW-0812">Transmembrane</keyword>
<keyword id="KW-1133">Transmembrane helix</keyword>
<keyword id="KW-0813">Transport</keyword>
<reference key="1">
    <citation type="journal article" date="2004" name="Nat. Genet.">
        <title>Comparison of genome degradation in Paratyphi A and Typhi, human-restricted serovars of Salmonella enterica that cause typhoid.</title>
        <authorList>
            <person name="McClelland M."/>
            <person name="Sanderson K.E."/>
            <person name="Clifton S.W."/>
            <person name="Latreille P."/>
            <person name="Porwollik S."/>
            <person name="Sabo A."/>
            <person name="Meyer R."/>
            <person name="Bieri T."/>
            <person name="Ozersky P."/>
            <person name="McLellan M."/>
            <person name="Harkins C.R."/>
            <person name="Wang C."/>
            <person name="Nguyen C."/>
            <person name="Berghoff A."/>
            <person name="Elliott G."/>
            <person name="Kohlberg S."/>
            <person name="Strong C."/>
            <person name="Du F."/>
            <person name="Carter J."/>
            <person name="Kremizki C."/>
            <person name="Layman D."/>
            <person name="Leonard S."/>
            <person name="Sun H."/>
            <person name="Fulton L."/>
            <person name="Nash W."/>
            <person name="Miner T."/>
            <person name="Minx P."/>
            <person name="Delehaunty K."/>
            <person name="Fronick C."/>
            <person name="Magrini V."/>
            <person name="Nhan M."/>
            <person name="Warren W."/>
            <person name="Florea L."/>
            <person name="Spieth J."/>
            <person name="Wilson R.K."/>
        </authorList>
    </citation>
    <scope>NUCLEOTIDE SEQUENCE [LARGE SCALE GENOMIC DNA]</scope>
    <source>
        <strain>ATCC 9150 / SARB42</strain>
    </source>
</reference>
<protein>
    <recommendedName>
        <fullName evidence="1">Cobalt transport protein CbiN</fullName>
    </recommendedName>
    <alternativeName>
        <fullName evidence="1">Energy-coupling factor transporter probable substrate-capture protein CbiN</fullName>
        <shortName evidence="1">ECF transporter S component CbiN</shortName>
    </alternativeName>
</protein>
<dbReference type="EMBL" id="CP000026">
    <property type="protein sequence ID" value="AAV76837.1"/>
    <property type="molecule type" value="Genomic_DNA"/>
</dbReference>
<dbReference type="RefSeq" id="WP_000753216.1">
    <property type="nucleotide sequence ID" value="NC_006511.1"/>
</dbReference>
<dbReference type="KEGG" id="spt:SPA0849"/>
<dbReference type="HOGENOM" id="CLU_136197_2_0_6"/>
<dbReference type="UniPathway" id="UPA00148"/>
<dbReference type="Proteomes" id="UP000008185">
    <property type="component" value="Chromosome"/>
</dbReference>
<dbReference type="GO" id="GO:0005886">
    <property type="term" value="C:plasma membrane"/>
    <property type="evidence" value="ECO:0007669"/>
    <property type="project" value="UniProtKB-SubCell"/>
</dbReference>
<dbReference type="GO" id="GO:0015087">
    <property type="term" value="F:cobalt ion transmembrane transporter activity"/>
    <property type="evidence" value="ECO:0007669"/>
    <property type="project" value="UniProtKB-UniRule"/>
</dbReference>
<dbReference type="GO" id="GO:0009236">
    <property type="term" value="P:cobalamin biosynthetic process"/>
    <property type="evidence" value="ECO:0007669"/>
    <property type="project" value="UniProtKB-UniRule"/>
</dbReference>
<dbReference type="HAMAP" id="MF_00330">
    <property type="entry name" value="CbiN"/>
    <property type="match status" value="1"/>
</dbReference>
<dbReference type="InterPro" id="IPR003705">
    <property type="entry name" value="CbiN"/>
</dbReference>
<dbReference type="NCBIfam" id="TIGR01165">
    <property type="entry name" value="cbiN"/>
    <property type="match status" value="1"/>
</dbReference>
<dbReference type="NCBIfam" id="NF002780">
    <property type="entry name" value="PRK02898.1"/>
    <property type="match status" value="1"/>
</dbReference>
<dbReference type="PANTHER" id="PTHR38662">
    <property type="entry name" value="COBALT TRANSPORT PROTEIN CBIN"/>
    <property type="match status" value="1"/>
</dbReference>
<dbReference type="PANTHER" id="PTHR38662:SF1">
    <property type="entry name" value="COBALT TRANSPORT PROTEIN CBIN"/>
    <property type="match status" value="1"/>
</dbReference>
<dbReference type="Pfam" id="PF02553">
    <property type="entry name" value="CbiN"/>
    <property type="match status" value="1"/>
</dbReference>
<sequence>MKKTLMLLAMVVALVILPFFINHGGEYGGSDGEAESQIQALAPQYKPWFQPLYEPASGEIESLLFTLQGSLGAAVIFYILGYCKGKQRRDDRA</sequence>
<evidence type="ECO:0000255" key="1">
    <source>
        <dbReference type="HAMAP-Rule" id="MF_00330"/>
    </source>
</evidence>
<name>CBIN_SALPA</name>
<gene>
    <name evidence="1" type="primary">cbiN</name>
    <name type="ordered locus">SPA0849</name>
</gene>
<organism>
    <name type="scientific">Salmonella paratyphi A (strain ATCC 9150 / SARB42)</name>
    <dbReference type="NCBI Taxonomy" id="295319"/>
    <lineage>
        <taxon>Bacteria</taxon>
        <taxon>Pseudomonadati</taxon>
        <taxon>Pseudomonadota</taxon>
        <taxon>Gammaproteobacteria</taxon>
        <taxon>Enterobacterales</taxon>
        <taxon>Enterobacteriaceae</taxon>
        <taxon>Salmonella</taxon>
    </lineage>
</organism>
<feature type="chain" id="PRO_1000019399" description="Cobalt transport protein CbiN">
    <location>
        <begin position="1"/>
        <end position="93"/>
    </location>
</feature>
<feature type="transmembrane region" description="Helical" evidence="1">
    <location>
        <begin position="5"/>
        <end position="25"/>
    </location>
</feature>
<feature type="transmembrane region" description="Helical" evidence="1">
    <location>
        <begin position="63"/>
        <end position="83"/>
    </location>
</feature>
<proteinExistence type="inferred from homology"/>